<name>H4_OLILU</name>
<evidence type="ECO:0000250" key="1"/>
<evidence type="ECO:0000256" key="2">
    <source>
        <dbReference type="SAM" id="MobiDB-lite"/>
    </source>
</evidence>
<evidence type="ECO:0000269" key="3">
    <source ref="1"/>
</evidence>
<evidence type="ECO:0000305" key="4"/>
<proteinExistence type="evidence at protein level"/>
<sequence length="103" mass="11423">MSGRGKGGKGLGKGGAKRHRRVLRDNIQGITKPAIRRLARRGGVKRISGLIYEETRGVLKVFLENVIRDAVTYTEHARRKTVTAMDVVYALKRQGRTLYGFGG</sequence>
<keyword id="KW-0007">Acetylation</keyword>
<keyword id="KW-0158">Chromosome</keyword>
<keyword id="KW-0903">Direct protein sequencing</keyword>
<keyword id="KW-0238">DNA-binding</keyword>
<keyword id="KW-0488">Methylation</keyword>
<keyword id="KW-0544">Nucleosome core</keyword>
<keyword id="KW-0539">Nucleus</keyword>
<feature type="initiator methionine" description="Removed" evidence="3">
    <location>
        <position position="1"/>
    </location>
</feature>
<feature type="chain" id="PRO_0000158337" description="Histone H4">
    <location>
        <begin position="2"/>
        <end position="103"/>
    </location>
</feature>
<feature type="DNA-binding region">
    <location>
        <begin position="17"/>
        <end position="21"/>
    </location>
</feature>
<feature type="region of interest" description="Disordered" evidence="2">
    <location>
        <begin position="1"/>
        <end position="20"/>
    </location>
</feature>
<feature type="compositionally biased region" description="Gly residues" evidence="2">
    <location>
        <begin position="1"/>
        <end position="14"/>
    </location>
</feature>
<feature type="modified residue" description="N-acetylserine" evidence="1">
    <location>
        <position position="2"/>
    </location>
</feature>
<feature type="modified residue" description="N6-acetyllysine" evidence="3">
    <location>
        <position position="17"/>
    </location>
</feature>
<feature type="modified residue" description="N6-methylated lysine" evidence="3">
    <location>
        <position position="80"/>
    </location>
</feature>
<comment type="function">
    <text>Core component of nucleosome. Nucleosomes wrap and compact DNA into chromatin, limiting DNA accessibility to the cellular machineries which require DNA as a template. Histones thereby play a central role in transcription regulation, DNA repair, DNA replication and chromosomal stability. DNA accessibility is regulated via a complex set of post-translational modifications of histones, also called histone code, and nucleosome remodeling.</text>
</comment>
<comment type="subunit">
    <text>The nucleosome is a histone octamer containing two molecules each of H2A, H2B, H3 and H4 assembled in one H3-H4 heterotetramer and two H2A-H2B heterodimers. The octamer wraps approximately 147 bp of DNA.</text>
</comment>
<comment type="subcellular location">
    <subcellularLocation>
        <location evidence="1">Nucleus</location>
    </subcellularLocation>
    <subcellularLocation>
        <location evidence="1">Chromosome</location>
    </subcellularLocation>
</comment>
<comment type="similarity">
    <text evidence="4">Belongs to the histone H4 family.</text>
</comment>
<dbReference type="SMR" id="P82888"/>
<dbReference type="GO" id="GO:0000786">
    <property type="term" value="C:nucleosome"/>
    <property type="evidence" value="ECO:0007669"/>
    <property type="project" value="UniProtKB-KW"/>
</dbReference>
<dbReference type="GO" id="GO:0005634">
    <property type="term" value="C:nucleus"/>
    <property type="evidence" value="ECO:0007669"/>
    <property type="project" value="UniProtKB-SubCell"/>
</dbReference>
<dbReference type="GO" id="GO:0003677">
    <property type="term" value="F:DNA binding"/>
    <property type="evidence" value="ECO:0007669"/>
    <property type="project" value="UniProtKB-KW"/>
</dbReference>
<dbReference type="GO" id="GO:0046982">
    <property type="term" value="F:protein heterodimerization activity"/>
    <property type="evidence" value="ECO:0007669"/>
    <property type="project" value="InterPro"/>
</dbReference>
<dbReference type="GO" id="GO:0030527">
    <property type="term" value="F:structural constituent of chromatin"/>
    <property type="evidence" value="ECO:0007669"/>
    <property type="project" value="InterPro"/>
</dbReference>
<dbReference type="CDD" id="cd22912">
    <property type="entry name" value="HFD_H4"/>
    <property type="match status" value="1"/>
</dbReference>
<dbReference type="FunFam" id="1.10.20.10:FF:000002">
    <property type="entry name" value="Histone H4"/>
    <property type="match status" value="1"/>
</dbReference>
<dbReference type="Gene3D" id="1.10.20.10">
    <property type="entry name" value="Histone, subunit A"/>
    <property type="match status" value="1"/>
</dbReference>
<dbReference type="InterPro" id="IPR035425">
    <property type="entry name" value="CENP-T/H4_C"/>
</dbReference>
<dbReference type="InterPro" id="IPR009072">
    <property type="entry name" value="Histone-fold"/>
</dbReference>
<dbReference type="InterPro" id="IPR001951">
    <property type="entry name" value="Histone_H4"/>
</dbReference>
<dbReference type="InterPro" id="IPR019809">
    <property type="entry name" value="Histone_H4_CS"/>
</dbReference>
<dbReference type="PANTHER" id="PTHR10484">
    <property type="entry name" value="HISTONE H4"/>
    <property type="match status" value="1"/>
</dbReference>
<dbReference type="Pfam" id="PF15511">
    <property type="entry name" value="CENP-T_C"/>
    <property type="match status" value="1"/>
</dbReference>
<dbReference type="PRINTS" id="PR00623">
    <property type="entry name" value="HISTONEH4"/>
</dbReference>
<dbReference type="SMART" id="SM00417">
    <property type="entry name" value="H4"/>
    <property type="match status" value="1"/>
</dbReference>
<dbReference type="SUPFAM" id="SSF47113">
    <property type="entry name" value="Histone-fold"/>
    <property type="match status" value="1"/>
</dbReference>
<dbReference type="PROSITE" id="PS00047">
    <property type="entry name" value="HISTONE_H4"/>
    <property type="match status" value="1"/>
</dbReference>
<accession>P82888</accession>
<organism>
    <name type="scientific">Olisthodiscus luteus</name>
    <name type="common">Marine phytoflagellate</name>
    <dbReference type="NCBI Taxonomy" id="83000"/>
    <lineage>
        <taxon>Eukaryota</taxon>
        <taxon>Sar</taxon>
        <taxon>Stramenopiles</taxon>
        <taxon>Ochrophyta</taxon>
        <taxon>Olisthodiscophyceae</taxon>
        <taxon>Olisthodiscaceae</taxon>
        <taxon>Olisthodiscus</taxon>
    </lineage>
</organism>
<reference evidence="4" key="1">
    <citation type="submission" date="2000-12" db="UniProtKB">
        <authorList>
            <person name="Rodrigues J.A."/>
            <person name="Spit A."/>
            <person name="Brandt W.F."/>
        </authorList>
    </citation>
    <scope>PROTEIN SEQUENCE OF 2-103</scope>
    <scope>ACETYLATION AT LYS-17</scope>
    <scope>METHYLATION AT LYS-80</scope>
</reference>
<protein>
    <recommendedName>
        <fullName>Histone H4</fullName>
    </recommendedName>
</protein>